<dbReference type="EC" id="3.1.3.16"/>
<dbReference type="EMBL" id="AC006053">
    <property type="protein sequence ID" value="AAD31375.1"/>
    <property type="molecule type" value="Genomic_DNA"/>
</dbReference>
<dbReference type="EMBL" id="CP002685">
    <property type="protein sequence ID" value="AEC07725.1"/>
    <property type="molecule type" value="Genomic_DNA"/>
</dbReference>
<dbReference type="EMBL" id="CP002685">
    <property type="protein sequence ID" value="ANM61961.1"/>
    <property type="molecule type" value="Genomic_DNA"/>
</dbReference>
<dbReference type="EMBL" id="AF326901">
    <property type="protein sequence ID" value="AAG41483.1"/>
    <property type="molecule type" value="mRNA"/>
</dbReference>
<dbReference type="EMBL" id="AF339719">
    <property type="protein sequence ID" value="AAK00401.1"/>
    <property type="molecule type" value="mRNA"/>
</dbReference>
<dbReference type="EMBL" id="AF436827">
    <property type="protein sequence ID" value="AAL32009.1"/>
    <property type="molecule type" value="mRNA"/>
</dbReference>
<dbReference type="EMBL" id="AY039595">
    <property type="protein sequence ID" value="AAK62650.1"/>
    <property type="molecule type" value="mRNA"/>
</dbReference>
<dbReference type="EMBL" id="AY057740">
    <property type="protein sequence ID" value="AAL15370.1"/>
    <property type="molecule type" value="mRNA"/>
</dbReference>
<dbReference type="EMBL" id="BT002487">
    <property type="protein sequence ID" value="AAO00847.1"/>
    <property type="molecule type" value="mRNA"/>
</dbReference>
<dbReference type="PIR" id="F84650">
    <property type="entry name" value="F84650"/>
</dbReference>
<dbReference type="SMR" id="Q9SLA1"/>
<dbReference type="BioGRID" id="2454">
    <property type="interactions" value="48"/>
</dbReference>
<dbReference type="FunCoup" id="Q9SLA1">
    <property type="interactions" value="30"/>
</dbReference>
<dbReference type="IntAct" id="Q9SLA1">
    <property type="interactions" value="46"/>
</dbReference>
<dbReference type="STRING" id="3702.Q9SLA1"/>
<dbReference type="iPTMnet" id="Q9SLA1"/>
<dbReference type="PaxDb" id="3702-AT2G25620.1"/>
<dbReference type="ProteomicsDB" id="248874"/>
<dbReference type="EnsemblPlants" id="AT2G25620.1">
    <property type="protein sequence ID" value="AT2G25620.1"/>
    <property type="gene ID" value="AT2G25620"/>
</dbReference>
<dbReference type="EnsemblPlants" id="AT2G25620.2">
    <property type="protein sequence ID" value="AT2G25620.2"/>
    <property type="gene ID" value="AT2G25620"/>
</dbReference>
<dbReference type="Gramene" id="AT2G25620.1">
    <property type="protein sequence ID" value="AT2G25620.1"/>
    <property type="gene ID" value="AT2G25620"/>
</dbReference>
<dbReference type="Gramene" id="AT2G25620.2">
    <property type="protein sequence ID" value="AT2G25620.2"/>
    <property type="gene ID" value="AT2G25620"/>
</dbReference>
<dbReference type="KEGG" id="ath:AT2G25620"/>
<dbReference type="Araport" id="AT2G25620"/>
<dbReference type="TAIR" id="AT2G25620">
    <property type="gene designation" value="DBP1"/>
</dbReference>
<dbReference type="eggNOG" id="KOG0698">
    <property type="taxonomic scope" value="Eukaryota"/>
</dbReference>
<dbReference type="HOGENOM" id="CLU_013173_21_2_1"/>
<dbReference type="InParanoid" id="Q9SLA1"/>
<dbReference type="OMA" id="FACHHIP"/>
<dbReference type="OrthoDB" id="10264738at2759"/>
<dbReference type="PhylomeDB" id="Q9SLA1"/>
<dbReference type="PRO" id="PR:Q9SLA1"/>
<dbReference type="Proteomes" id="UP000006548">
    <property type="component" value="Chromosome 2"/>
</dbReference>
<dbReference type="ExpressionAtlas" id="Q9SLA1">
    <property type="expression patterns" value="baseline and differential"/>
</dbReference>
<dbReference type="GO" id="GO:0005829">
    <property type="term" value="C:cytosol"/>
    <property type="evidence" value="ECO:0000314"/>
    <property type="project" value="TAIR"/>
</dbReference>
<dbReference type="GO" id="GO:0005634">
    <property type="term" value="C:nucleus"/>
    <property type="evidence" value="ECO:0000314"/>
    <property type="project" value="TAIR"/>
</dbReference>
<dbReference type="GO" id="GO:0046872">
    <property type="term" value="F:metal ion binding"/>
    <property type="evidence" value="ECO:0007669"/>
    <property type="project" value="UniProtKB-KW"/>
</dbReference>
<dbReference type="GO" id="GO:0004722">
    <property type="term" value="F:protein serine/threonine phosphatase activity"/>
    <property type="evidence" value="ECO:0007669"/>
    <property type="project" value="UniProtKB-EC"/>
</dbReference>
<dbReference type="GO" id="GO:0050688">
    <property type="term" value="P:regulation of defense response to virus"/>
    <property type="evidence" value="ECO:0000315"/>
    <property type="project" value="TAIR"/>
</dbReference>
<dbReference type="CDD" id="cd00143">
    <property type="entry name" value="PP2Cc"/>
    <property type="match status" value="1"/>
</dbReference>
<dbReference type="FunFam" id="3.60.40.10:FF:000004">
    <property type="entry name" value="Probable protein phosphatase 2C 22"/>
    <property type="match status" value="1"/>
</dbReference>
<dbReference type="Gene3D" id="3.60.40.10">
    <property type="entry name" value="PPM-type phosphatase domain"/>
    <property type="match status" value="1"/>
</dbReference>
<dbReference type="InterPro" id="IPR015655">
    <property type="entry name" value="PP2C"/>
</dbReference>
<dbReference type="InterPro" id="IPR000222">
    <property type="entry name" value="PP2C_BS"/>
</dbReference>
<dbReference type="InterPro" id="IPR036457">
    <property type="entry name" value="PPM-type-like_dom_sf"/>
</dbReference>
<dbReference type="InterPro" id="IPR001932">
    <property type="entry name" value="PPM-type_phosphatase-like_dom"/>
</dbReference>
<dbReference type="PANTHER" id="PTHR13832">
    <property type="entry name" value="PROTEIN PHOSPHATASE 2C"/>
    <property type="match status" value="1"/>
</dbReference>
<dbReference type="PANTHER" id="PTHR13832:SF790">
    <property type="entry name" value="PROTEIN PHOSPHATASE 2C 22-RELATED"/>
    <property type="match status" value="1"/>
</dbReference>
<dbReference type="Pfam" id="PF00481">
    <property type="entry name" value="PP2C"/>
    <property type="match status" value="1"/>
</dbReference>
<dbReference type="SMART" id="SM00332">
    <property type="entry name" value="PP2Cc"/>
    <property type="match status" value="1"/>
</dbReference>
<dbReference type="SUPFAM" id="SSF81606">
    <property type="entry name" value="PP2C-like"/>
    <property type="match status" value="1"/>
</dbReference>
<dbReference type="PROSITE" id="PS01032">
    <property type="entry name" value="PPM_1"/>
    <property type="match status" value="1"/>
</dbReference>
<dbReference type="PROSITE" id="PS51746">
    <property type="entry name" value="PPM_2"/>
    <property type="match status" value="1"/>
</dbReference>
<gene>
    <name type="ordered locus">At2g25620</name>
    <name type="ORF">F3N11.7</name>
</gene>
<comment type="catalytic activity">
    <reaction>
        <text>O-phospho-L-seryl-[protein] + H2O = L-seryl-[protein] + phosphate</text>
        <dbReference type="Rhea" id="RHEA:20629"/>
        <dbReference type="Rhea" id="RHEA-COMP:9863"/>
        <dbReference type="Rhea" id="RHEA-COMP:11604"/>
        <dbReference type="ChEBI" id="CHEBI:15377"/>
        <dbReference type="ChEBI" id="CHEBI:29999"/>
        <dbReference type="ChEBI" id="CHEBI:43474"/>
        <dbReference type="ChEBI" id="CHEBI:83421"/>
        <dbReference type="EC" id="3.1.3.16"/>
    </reaction>
</comment>
<comment type="catalytic activity">
    <reaction>
        <text>O-phospho-L-threonyl-[protein] + H2O = L-threonyl-[protein] + phosphate</text>
        <dbReference type="Rhea" id="RHEA:47004"/>
        <dbReference type="Rhea" id="RHEA-COMP:11060"/>
        <dbReference type="Rhea" id="RHEA-COMP:11605"/>
        <dbReference type="ChEBI" id="CHEBI:15377"/>
        <dbReference type="ChEBI" id="CHEBI:30013"/>
        <dbReference type="ChEBI" id="CHEBI:43474"/>
        <dbReference type="ChEBI" id="CHEBI:61977"/>
        <dbReference type="EC" id="3.1.3.16"/>
    </reaction>
</comment>
<comment type="cofactor">
    <cofactor evidence="1">
        <name>Mg(2+)</name>
        <dbReference type="ChEBI" id="CHEBI:18420"/>
    </cofactor>
    <cofactor evidence="1">
        <name>Mn(2+)</name>
        <dbReference type="ChEBI" id="CHEBI:29035"/>
    </cofactor>
    <text evidence="1">Binds 2 magnesium or manganese ions per subunit.</text>
</comment>
<comment type="interaction">
    <interactant intactId="EBI-15193303">
        <id>Q9SLA1</id>
    </interactant>
    <interactant intactId="EBI-4426168">
        <id>Q9FTA2</id>
        <label>TCP21</label>
    </interactant>
    <organismsDiffer>false</organismsDiffer>
    <experiments>3</experiments>
</comment>
<comment type="interaction">
    <interactant intactId="EBI-15193303">
        <id>Q9SLA1</id>
    </interactant>
    <interactant intactId="EBI-15192325">
        <id>Q8LPR5</id>
        <label>TCP4</label>
    </interactant>
    <organismsDiffer>false</organismsDiffer>
    <experiments>3</experiments>
</comment>
<comment type="similarity">
    <text evidence="4">Belongs to the PP2C family.</text>
</comment>
<keyword id="KW-0378">Hydrolase</keyword>
<keyword id="KW-0460">Magnesium</keyword>
<keyword id="KW-0464">Manganese</keyword>
<keyword id="KW-0479">Metal-binding</keyword>
<keyword id="KW-0904">Protein phosphatase</keyword>
<keyword id="KW-1185">Reference proteome</keyword>
<accession>Q9SLA1</accession>
<evidence type="ECO:0000250" key="1"/>
<evidence type="ECO:0000255" key="2">
    <source>
        <dbReference type="PROSITE-ProRule" id="PRU01082"/>
    </source>
</evidence>
<evidence type="ECO:0000256" key="3">
    <source>
        <dbReference type="SAM" id="MobiDB-lite"/>
    </source>
</evidence>
<evidence type="ECO:0000305" key="4"/>
<organism>
    <name type="scientific">Arabidopsis thaliana</name>
    <name type="common">Mouse-ear cress</name>
    <dbReference type="NCBI Taxonomy" id="3702"/>
    <lineage>
        <taxon>Eukaryota</taxon>
        <taxon>Viridiplantae</taxon>
        <taxon>Streptophyta</taxon>
        <taxon>Embryophyta</taxon>
        <taxon>Tracheophyta</taxon>
        <taxon>Spermatophyta</taxon>
        <taxon>Magnoliopsida</taxon>
        <taxon>eudicotyledons</taxon>
        <taxon>Gunneridae</taxon>
        <taxon>Pentapetalae</taxon>
        <taxon>rosids</taxon>
        <taxon>malvids</taxon>
        <taxon>Brassicales</taxon>
        <taxon>Brassicaceae</taxon>
        <taxon>Camelineae</taxon>
        <taxon>Arabidopsis</taxon>
    </lineage>
</organism>
<feature type="chain" id="PRO_0000367952" description="Probable protein phosphatase 2C 22">
    <location>
        <begin position="1"/>
        <end position="392"/>
    </location>
</feature>
<feature type="domain" description="PPM-type phosphatase" evidence="2">
    <location>
        <begin position="89"/>
        <end position="356"/>
    </location>
</feature>
<feature type="region of interest" description="Disordered" evidence="3">
    <location>
        <begin position="1"/>
        <end position="26"/>
    </location>
</feature>
<feature type="binding site" evidence="1">
    <location>
        <position position="133"/>
    </location>
    <ligand>
        <name>Mn(2+)</name>
        <dbReference type="ChEBI" id="CHEBI:29035"/>
        <label>1</label>
    </ligand>
</feature>
<feature type="binding site" evidence="1">
    <location>
        <position position="133"/>
    </location>
    <ligand>
        <name>Mn(2+)</name>
        <dbReference type="ChEBI" id="CHEBI:29035"/>
        <label>2</label>
    </ligand>
</feature>
<feature type="binding site" evidence="1">
    <location>
        <position position="134"/>
    </location>
    <ligand>
        <name>Mn(2+)</name>
        <dbReference type="ChEBI" id="CHEBI:29035"/>
        <label>1</label>
    </ligand>
</feature>
<feature type="binding site" evidence="1">
    <location>
        <position position="304"/>
    </location>
    <ligand>
        <name>Mn(2+)</name>
        <dbReference type="ChEBI" id="CHEBI:29035"/>
        <label>2</label>
    </ligand>
</feature>
<feature type="binding site" evidence="1">
    <location>
        <position position="347"/>
    </location>
    <ligand>
        <name>Mn(2+)</name>
        <dbReference type="ChEBI" id="CHEBI:29035"/>
        <label>2</label>
    </ligand>
</feature>
<name>P2C22_ARATH</name>
<reference key="1">
    <citation type="journal article" date="1999" name="Nature">
        <title>Sequence and analysis of chromosome 2 of the plant Arabidopsis thaliana.</title>
        <authorList>
            <person name="Lin X."/>
            <person name="Kaul S."/>
            <person name="Rounsley S.D."/>
            <person name="Shea T.P."/>
            <person name="Benito M.-I."/>
            <person name="Town C.D."/>
            <person name="Fujii C.Y."/>
            <person name="Mason T.M."/>
            <person name="Bowman C.L."/>
            <person name="Barnstead M.E."/>
            <person name="Feldblyum T.V."/>
            <person name="Buell C.R."/>
            <person name="Ketchum K.A."/>
            <person name="Lee J.J."/>
            <person name="Ronning C.M."/>
            <person name="Koo H.L."/>
            <person name="Moffat K.S."/>
            <person name="Cronin L.A."/>
            <person name="Shen M."/>
            <person name="Pai G."/>
            <person name="Van Aken S."/>
            <person name="Umayam L."/>
            <person name="Tallon L.J."/>
            <person name="Gill J.E."/>
            <person name="Adams M.D."/>
            <person name="Carrera A.J."/>
            <person name="Creasy T.H."/>
            <person name="Goodman H.M."/>
            <person name="Somerville C.R."/>
            <person name="Copenhaver G.P."/>
            <person name="Preuss D."/>
            <person name="Nierman W.C."/>
            <person name="White O."/>
            <person name="Eisen J.A."/>
            <person name="Salzberg S.L."/>
            <person name="Fraser C.M."/>
            <person name="Venter J.C."/>
        </authorList>
    </citation>
    <scope>NUCLEOTIDE SEQUENCE [LARGE SCALE GENOMIC DNA]</scope>
    <source>
        <strain>cv. Columbia</strain>
    </source>
</reference>
<reference key="2">
    <citation type="journal article" date="2017" name="Plant J.">
        <title>Araport11: a complete reannotation of the Arabidopsis thaliana reference genome.</title>
        <authorList>
            <person name="Cheng C.Y."/>
            <person name="Krishnakumar V."/>
            <person name="Chan A.P."/>
            <person name="Thibaud-Nissen F."/>
            <person name="Schobel S."/>
            <person name="Town C.D."/>
        </authorList>
    </citation>
    <scope>GENOME REANNOTATION</scope>
    <source>
        <strain>cv. Columbia</strain>
    </source>
</reference>
<reference key="3">
    <citation type="journal article" date="2003" name="Science">
        <title>Empirical analysis of transcriptional activity in the Arabidopsis genome.</title>
        <authorList>
            <person name="Yamada K."/>
            <person name="Lim J."/>
            <person name="Dale J.M."/>
            <person name="Chen H."/>
            <person name="Shinn P."/>
            <person name="Palm C.J."/>
            <person name="Southwick A.M."/>
            <person name="Wu H.C."/>
            <person name="Kim C.J."/>
            <person name="Nguyen M."/>
            <person name="Pham P.K."/>
            <person name="Cheuk R.F."/>
            <person name="Karlin-Newmann G."/>
            <person name="Liu S.X."/>
            <person name="Lam B."/>
            <person name="Sakano H."/>
            <person name="Wu T."/>
            <person name="Yu G."/>
            <person name="Miranda M."/>
            <person name="Quach H.L."/>
            <person name="Tripp M."/>
            <person name="Chang C.H."/>
            <person name="Lee J.M."/>
            <person name="Toriumi M.J."/>
            <person name="Chan M.M."/>
            <person name="Tang C.C."/>
            <person name="Onodera C.S."/>
            <person name="Deng J.M."/>
            <person name="Akiyama K."/>
            <person name="Ansari Y."/>
            <person name="Arakawa T."/>
            <person name="Banh J."/>
            <person name="Banno F."/>
            <person name="Bowser L."/>
            <person name="Brooks S.Y."/>
            <person name="Carninci P."/>
            <person name="Chao Q."/>
            <person name="Choy N."/>
            <person name="Enju A."/>
            <person name="Goldsmith A.D."/>
            <person name="Gurjal M."/>
            <person name="Hansen N.F."/>
            <person name="Hayashizaki Y."/>
            <person name="Johnson-Hopson C."/>
            <person name="Hsuan V.W."/>
            <person name="Iida K."/>
            <person name="Karnes M."/>
            <person name="Khan S."/>
            <person name="Koesema E."/>
            <person name="Ishida J."/>
            <person name="Jiang P.X."/>
            <person name="Jones T."/>
            <person name="Kawai J."/>
            <person name="Kamiya A."/>
            <person name="Meyers C."/>
            <person name="Nakajima M."/>
            <person name="Narusaka M."/>
            <person name="Seki M."/>
            <person name="Sakurai T."/>
            <person name="Satou M."/>
            <person name="Tamse R."/>
            <person name="Vaysberg M."/>
            <person name="Wallender E.K."/>
            <person name="Wong C."/>
            <person name="Yamamura Y."/>
            <person name="Yuan S."/>
            <person name="Shinozaki K."/>
            <person name="Davis R.W."/>
            <person name="Theologis A."/>
            <person name="Ecker J.R."/>
        </authorList>
    </citation>
    <scope>NUCLEOTIDE SEQUENCE [LARGE SCALE MRNA]</scope>
    <source>
        <strain>cv. Columbia</strain>
    </source>
</reference>
<reference key="4">
    <citation type="journal article" date="2008" name="BMC Genomics">
        <title>Genome-wide and expression analysis of protein phosphatase 2C in rice and Arabidopsis.</title>
        <authorList>
            <person name="Xue T."/>
            <person name="Wang D."/>
            <person name="Zhang S."/>
            <person name="Ehlting J."/>
            <person name="Ni F."/>
            <person name="Jacab S."/>
            <person name="Zheng C."/>
            <person name="Zhong Y."/>
        </authorList>
    </citation>
    <scope>GENE FAMILY</scope>
    <scope>NOMENCLATURE</scope>
</reference>
<protein>
    <recommendedName>
        <fullName>Probable protein phosphatase 2C 22</fullName>
        <shortName>AtPP2C22</shortName>
        <ecNumber>3.1.3.16</ecNumber>
    </recommendedName>
</protein>
<sequence length="392" mass="42674">MEETRGISDPENGSSSYGGKPPNPLSFSSSSAAAAVYRQTFDGERSLAPCNKRSLVRHSSLVKTMVSDISVENEFTIEKNKSEFVPATRSGAWSDIGSRSSMEDAYLCVDNFMDSFGLLNSEAGPSAFYGVFDGHGGKHAAEFACHHIPRYIVEDQEFPSEINKVLSSAFLQTDTAFLEACSLDGSLASGTTALAAILFGRSLVVANAGDCRAVLSRQGKAIEMSRDHKPMSSKERRRIEASGGHVFDGYLNGQLNVARALGDFHMEGMKKKKDGSDCGPLIAEPELMTTKLTEEDEFLIIGCDGVWDVFMSQNAVDFARRRLQEHNDPVMCSKELVEEALKRKSADNVTAVVVCLQPQPPPNLVAPRLRVHRSFSAEGLKDLQSYLDGLGN</sequence>
<proteinExistence type="evidence at protein level"/>